<feature type="chain" id="PRO_0000301392" description="Phosphoglucosamine mutase">
    <location>
        <begin position="1"/>
        <end position="450"/>
    </location>
</feature>
<feature type="active site" description="Phosphoserine intermediate" evidence="1">
    <location>
        <position position="101"/>
    </location>
</feature>
<feature type="binding site" description="via phosphate group" evidence="1">
    <location>
        <position position="101"/>
    </location>
    <ligand>
        <name>Mg(2+)</name>
        <dbReference type="ChEBI" id="CHEBI:18420"/>
    </ligand>
</feature>
<feature type="binding site" evidence="1">
    <location>
        <position position="240"/>
    </location>
    <ligand>
        <name>Mg(2+)</name>
        <dbReference type="ChEBI" id="CHEBI:18420"/>
    </ligand>
</feature>
<feature type="binding site" evidence="1">
    <location>
        <position position="242"/>
    </location>
    <ligand>
        <name>Mg(2+)</name>
        <dbReference type="ChEBI" id="CHEBI:18420"/>
    </ligand>
</feature>
<feature type="binding site" evidence="1">
    <location>
        <position position="244"/>
    </location>
    <ligand>
        <name>Mg(2+)</name>
        <dbReference type="ChEBI" id="CHEBI:18420"/>
    </ligand>
</feature>
<feature type="modified residue" description="Phosphoserine" evidence="1">
    <location>
        <position position="101"/>
    </location>
</feature>
<keyword id="KW-0413">Isomerase</keyword>
<keyword id="KW-0460">Magnesium</keyword>
<keyword id="KW-0479">Metal-binding</keyword>
<keyword id="KW-0597">Phosphoprotein</keyword>
<keyword id="KW-1185">Reference proteome</keyword>
<accession>A3CM30</accession>
<dbReference type="EC" id="5.4.2.10" evidence="1"/>
<dbReference type="EMBL" id="CP000387">
    <property type="protein sequence ID" value="ABN44235.1"/>
    <property type="molecule type" value="Genomic_DNA"/>
</dbReference>
<dbReference type="RefSeq" id="WP_002902729.1">
    <property type="nucleotide sequence ID" value="NC_009009.1"/>
</dbReference>
<dbReference type="RefSeq" id="YP_001034785.1">
    <property type="nucleotide sequence ID" value="NC_009009.1"/>
</dbReference>
<dbReference type="SMR" id="A3CM30"/>
<dbReference type="STRING" id="388919.SSA_0804"/>
<dbReference type="GeneID" id="48425226"/>
<dbReference type="KEGG" id="ssa:SSA_0804"/>
<dbReference type="PATRIC" id="fig|388919.9.peg.770"/>
<dbReference type="eggNOG" id="COG1109">
    <property type="taxonomic scope" value="Bacteria"/>
</dbReference>
<dbReference type="HOGENOM" id="CLU_016950_7_0_9"/>
<dbReference type="OrthoDB" id="9806956at2"/>
<dbReference type="Proteomes" id="UP000002148">
    <property type="component" value="Chromosome"/>
</dbReference>
<dbReference type="GO" id="GO:0005829">
    <property type="term" value="C:cytosol"/>
    <property type="evidence" value="ECO:0007669"/>
    <property type="project" value="TreeGrafter"/>
</dbReference>
<dbReference type="GO" id="GO:0000287">
    <property type="term" value="F:magnesium ion binding"/>
    <property type="evidence" value="ECO:0007669"/>
    <property type="project" value="UniProtKB-UniRule"/>
</dbReference>
<dbReference type="GO" id="GO:0008966">
    <property type="term" value="F:phosphoglucosamine mutase activity"/>
    <property type="evidence" value="ECO:0007669"/>
    <property type="project" value="UniProtKB-UniRule"/>
</dbReference>
<dbReference type="GO" id="GO:0004615">
    <property type="term" value="F:phosphomannomutase activity"/>
    <property type="evidence" value="ECO:0007669"/>
    <property type="project" value="TreeGrafter"/>
</dbReference>
<dbReference type="GO" id="GO:0005975">
    <property type="term" value="P:carbohydrate metabolic process"/>
    <property type="evidence" value="ECO:0007669"/>
    <property type="project" value="InterPro"/>
</dbReference>
<dbReference type="GO" id="GO:0009252">
    <property type="term" value="P:peptidoglycan biosynthetic process"/>
    <property type="evidence" value="ECO:0007669"/>
    <property type="project" value="TreeGrafter"/>
</dbReference>
<dbReference type="GO" id="GO:0006048">
    <property type="term" value="P:UDP-N-acetylglucosamine biosynthetic process"/>
    <property type="evidence" value="ECO:0007669"/>
    <property type="project" value="TreeGrafter"/>
</dbReference>
<dbReference type="CDD" id="cd05802">
    <property type="entry name" value="GlmM"/>
    <property type="match status" value="1"/>
</dbReference>
<dbReference type="FunFam" id="3.30.310.50:FF:000001">
    <property type="entry name" value="Phosphoglucosamine mutase"/>
    <property type="match status" value="1"/>
</dbReference>
<dbReference type="FunFam" id="3.40.120.10:FF:000001">
    <property type="entry name" value="Phosphoglucosamine mutase"/>
    <property type="match status" value="1"/>
</dbReference>
<dbReference type="FunFam" id="3.40.120.10:FF:000002">
    <property type="entry name" value="Phosphoglucosamine mutase"/>
    <property type="match status" value="1"/>
</dbReference>
<dbReference type="Gene3D" id="3.40.120.10">
    <property type="entry name" value="Alpha-D-Glucose-1,6-Bisphosphate, subunit A, domain 3"/>
    <property type="match status" value="3"/>
</dbReference>
<dbReference type="Gene3D" id="3.30.310.50">
    <property type="entry name" value="Alpha-D-phosphohexomutase, C-terminal domain"/>
    <property type="match status" value="1"/>
</dbReference>
<dbReference type="HAMAP" id="MF_01554_B">
    <property type="entry name" value="GlmM_B"/>
    <property type="match status" value="1"/>
</dbReference>
<dbReference type="InterPro" id="IPR005844">
    <property type="entry name" value="A-D-PHexomutase_a/b/a-I"/>
</dbReference>
<dbReference type="InterPro" id="IPR016055">
    <property type="entry name" value="A-D-PHexomutase_a/b/a-I/II/III"/>
</dbReference>
<dbReference type="InterPro" id="IPR005845">
    <property type="entry name" value="A-D-PHexomutase_a/b/a-II"/>
</dbReference>
<dbReference type="InterPro" id="IPR005846">
    <property type="entry name" value="A-D-PHexomutase_a/b/a-III"/>
</dbReference>
<dbReference type="InterPro" id="IPR005843">
    <property type="entry name" value="A-D-PHexomutase_C"/>
</dbReference>
<dbReference type="InterPro" id="IPR036900">
    <property type="entry name" value="A-D-PHexomutase_C_sf"/>
</dbReference>
<dbReference type="InterPro" id="IPR016066">
    <property type="entry name" value="A-D-PHexomutase_CS"/>
</dbReference>
<dbReference type="InterPro" id="IPR005841">
    <property type="entry name" value="Alpha-D-phosphohexomutase_SF"/>
</dbReference>
<dbReference type="InterPro" id="IPR006352">
    <property type="entry name" value="GlmM_bact"/>
</dbReference>
<dbReference type="InterPro" id="IPR050060">
    <property type="entry name" value="Phosphoglucosamine_mutase"/>
</dbReference>
<dbReference type="NCBIfam" id="TIGR01455">
    <property type="entry name" value="glmM"/>
    <property type="match status" value="1"/>
</dbReference>
<dbReference type="NCBIfam" id="NF008139">
    <property type="entry name" value="PRK10887.1"/>
    <property type="match status" value="1"/>
</dbReference>
<dbReference type="PANTHER" id="PTHR42946:SF1">
    <property type="entry name" value="PHOSPHOGLUCOMUTASE (ALPHA-D-GLUCOSE-1,6-BISPHOSPHATE-DEPENDENT)"/>
    <property type="match status" value="1"/>
</dbReference>
<dbReference type="PANTHER" id="PTHR42946">
    <property type="entry name" value="PHOSPHOHEXOSE MUTASE"/>
    <property type="match status" value="1"/>
</dbReference>
<dbReference type="Pfam" id="PF02878">
    <property type="entry name" value="PGM_PMM_I"/>
    <property type="match status" value="1"/>
</dbReference>
<dbReference type="Pfam" id="PF02879">
    <property type="entry name" value="PGM_PMM_II"/>
    <property type="match status" value="1"/>
</dbReference>
<dbReference type="Pfam" id="PF02880">
    <property type="entry name" value="PGM_PMM_III"/>
    <property type="match status" value="1"/>
</dbReference>
<dbReference type="Pfam" id="PF00408">
    <property type="entry name" value="PGM_PMM_IV"/>
    <property type="match status" value="1"/>
</dbReference>
<dbReference type="PRINTS" id="PR00509">
    <property type="entry name" value="PGMPMM"/>
</dbReference>
<dbReference type="SUPFAM" id="SSF55957">
    <property type="entry name" value="Phosphoglucomutase, C-terminal domain"/>
    <property type="match status" value="1"/>
</dbReference>
<dbReference type="SUPFAM" id="SSF53738">
    <property type="entry name" value="Phosphoglucomutase, first 3 domains"/>
    <property type="match status" value="3"/>
</dbReference>
<dbReference type="PROSITE" id="PS00710">
    <property type="entry name" value="PGM_PMM"/>
    <property type="match status" value="1"/>
</dbReference>
<comment type="function">
    <text evidence="1">Catalyzes the conversion of glucosamine-6-phosphate to glucosamine-1-phosphate.</text>
</comment>
<comment type="catalytic activity">
    <reaction evidence="1">
        <text>alpha-D-glucosamine 1-phosphate = D-glucosamine 6-phosphate</text>
        <dbReference type="Rhea" id="RHEA:23424"/>
        <dbReference type="ChEBI" id="CHEBI:58516"/>
        <dbReference type="ChEBI" id="CHEBI:58725"/>
        <dbReference type="EC" id="5.4.2.10"/>
    </reaction>
</comment>
<comment type="cofactor">
    <cofactor evidence="1">
        <name>Mg(2+)</name>
        <dbReference type="ChEBI" id="CHEBI:18420"/>
    </cofactor>
    <text evidence="1">Binds 1 Mg(2+) ion per subunit.</text>
</comment>
<comment type="PTM">
    <text evidence="1">Activated by phosphorylation.</text>
</comment>
<comment type="similarity">
    <text evidence="1">Belongs to the phosphohexose mutase family.</text>
</comment>
<evidence type="ECO:0000255" key="1">
    <source>
        <dbReference type="HAMAP-Rule" id="MF_01554"/>
    </source>
</evidence>
<protein>
    <recommendedName>
        <fullName evidence="1">Phosphoglucosamine mutase</fullName>
        <ecNumber evidence="1">5.4.2.10</ecNumber>
    </recommendedName>
</protein>
<gene>
    <name evidence="1" type="primary">glmM</name>
    <name type="ordered locus">SSA_0804</name>
</gene>
<name>GLMM_STRSV</name>
<sequence>MGKYFGTDGVRGEANVELTPELAFKLGRFGGYVLSQHESEVPRVFVGRDTRISGEMLESALVAGLLSVGIHVYKLGVIATPGVAYLVKSEKASAGVMISASHNPALDNGIKFFGGDGYKLDDERELEIEALLDAAEDTLPRPSAEGLGDLVDYPEGLRKYQQYLVSTGLELEGMHVALDTANGAASTSARQIFADLGAQLTIIGENPDGLNINLNVGSTHPEALQEVVRESGAAIGLAFDGDSDRLIAVDENGELVDGDKIMYIIGKYLSEKGELAQNTIVTTVMSNLGFHKALDREGIQKAVTAVGDRYVVEEMRKNGYNLGGEQSGHVIIMDYNTTGDGQLSAVQLTKVMQETGKKLSELAAEVTIYPQKLVNIRVENSMKDKAMEVPAIKTVIERMEAEMAGNGRILVRPSGTEPLLRVMAEAPTDEEVNYYVDTIANVVRDEIGID</sequence>
<organism>
    <name type="scientific">Streptococcus sanguinis (strain SK36)</name>
    <dbReference type="NCBI Taxonomy" id="388919"/>
    <lineage>
        <taxon>Bacteria</taxon>
        <taxon>Bacillati</taxon>
        <taxon>Bacillota</taxon>
        <taxon>Bacilli</taxon>
        <taxon>Lactobacillales</taxon>
        <taxon>Streptococcaceae</taxon>
        <taxon>Streptococcus</taxon>
    </lineage>
</organism>
<reference key="1">
    <citation type="journal article" date="2007" name="J. Bacteriol.">
        <title>Genome of the opportunistic pathogen Streptococcus sanguinis.</title>
        <authorList>
            <person name="Xu P."/>
            <person name="Alves J.M."/>
            <person name="Kitten T."/>
            <person name="Brown A."/>
            <person name="Chen Z."/>
            <person name="Ozaki L.S."/>
            <person name="Manque P."/>
            <person name="Ge X."/>
            <person name="Serrano M.G."/>
            <person name="Puiu D."/>
            <person name="Hendricks S."/>
            <person name="Wang Y."/>
            <person name="Chaplin M.D."/>
            <person name="Akan D."/>
            <person name="Paik S."/>
            <person name="Peterson D.L."/>
            <person name="Macrina F.L."/>
            <person name="Buck G.A."/>
        </authorList>
    </citation>
    <scope>NUCLEOTIDE SEQUENCE [LARGE SCALE GENOMIC DNA]</scope>
    <source>
        <strain>SK36</strain>
    </source>
</reference>
<proteinExistence type="inferred from homology"/>